<sequence>MKGIFLVVQLGFSIMVFLFLAAVNWYQGSELVSDRFDWNYTAKLSKLLNGIDAVSSPKQISQLDFFIYSAKHYPVMSALMIISFLYVLAALFLLIYSVKCNKQEIHLDC</sequence>
<feature type="signal peptide" evidence="1">
    <location>
        <begin position="1"/>
        <end position="25"/>
    </location>
</feature>
<feature type="chain" id="PRO_0000013705" description="Uncharacterized protein YjdJ">
    <location>
        <begin position="26"/>
        <end position="109"/>
    </location>
</feature>
<feature type="transmembrane region" description="Helical" evidence="1">
    <location>
        <begin position="73"/>
        <end position="95"/>
    </location>
</feature>
<keyword id="KW-0472">Membrane</keyword>
<keyword id="KW-1185">Reference proteome</keyword>
<keyword id="KW-0732">Signal</keyword>
<keyword id="KW-0812">Transmembrane</keyword>
<keyword id="KW-1133">Transmembrane helix</keyword>
<protein>
    <recommendedName>
        <fullName>Uncharacterized protein YjdJ</fullName>
    </recommendedName>
</protein>
<reference key="1">
    <citation type="journal article" date="1997" name="Nature">
        <title>The complete genome sequence of the Gram-positive bacterium Bacillus subtilis.</title>
        <authorList>
            <person name="Kunst F."/>
            <person name="Ogasawara N."/>
            <person name="Moszer I."/>
            <person name="Albertini A.M."/>
            <person name="Alloni G."/>
            <person name="Azevedo V."/>
            <person name="Bertero M.G."/>
            <person name="Bessieres P."/>
            <person name="Bolotin A."/>
            <person name="Borchert S."/>
            <person name="Borriss R."/>
            <person name="Boursier L."/>
            <person name="Brans A."/>
            <person name="Braun M."/>
            <person name="Brignell S.C."/>
            <person name="Bron S."/>
            <person name="Brouillet S."/>
            <person name="Bruschi C.V."/>
            <person name="Caldwell B."/>
            <person name="Capuano V."/>
            <person name="Carter N.M."/>
            <person name="Choi S.-K."/>
            <person name="Codani J.-J."/>
            <person name="Connerton I.F."/>
            <person name="Cummings N.J."/>
            <person name="Daniel R.A."/>
            <person name="Denizot F."/>
            <person name="Devine K.M."/>
            <person name="Duesterhoeft A."/>
            <person name="Ehrlich S.D."/>
            <person name="Emmerson P.T."/>
            <person name="Entian K.-D."/>
            <person name="Errington J."/>
            <person name="Fabret C."/>
            <person name="Ferrari E."/>
            <person name="Foulger D."/>
            <person name="Fritz C."/>
            <person name="Fujita M."/>
            <person name="Fujita Y."/>
            <person name="Fuma S."/>
            <person name="Galizzi A."/>
            <person name="Galleron N."/>
            <person name="Ghim S.-Y."/>
            <person name="Glaser P."/>
            <person name="Goffeau A."/>
            <person name="Golightly E.J."/>
            <person name="Grandi G."/>
            <person name="Guiseppi G."/>
            <person name="Guy B.J."/>
            <person name="Haga K."/>
            <person name="Haiech J."/>
            <person name="Harwood C.R."/>
            <person name="Henaut A."/>
            <person name="Hilbert H."/>
            <person name="Holsappel S."/>
            <person name="Hosono S."/>
            <person name="Hullo M.-F."/>
            <person name="Itaya M."/>
            <person name="Jones L.-M."/>
            <person name="Joris B."/>
            <person name="Karamata D."/>
            <person name="Kasahara Y."/>
            <person name="Klaerr-Blanchard M."/>
            <person name="Klein C."/>
            <person name="Kobayashi Y."/>
            <person name="Koetter P."/>
            <person name="Koningstein G."/>
            <person name="Krogh S."/>
            <person name="Kumano M."/>
            <person name="Kurita K."/>
            <person name="Lapidus A."/>
            <person name="Lardinois S."/>
            <person name="Lauber J."/>
            <person name="Lazarevic V."/>
            <person name="Lee S.-M."/>
            <person name="Levine A."/>
            <person name="Liu H."/>
            <person name="Masuda S."/>
            <person name="Mauel C."/>
            <person name="Medigue C."/>
            <person name="Medina N."/>
            <person name="Mellado R.P."/>
            <person name="Mizuno M."/>
            <person name="Moestl D."/>
            <person name="Nakai S."/>
            <person name="Noback M."/>
            <person name="Noone D."/>
            <person name="O'Reilly M."/>
            <person name="Ogawa K."/>
            <person name="Ogiwara A."/>
            <person name="Oudega B."/>
            <person name="Park S.-H."/>
            <person name="Parro V."/>
            <person name="Pohl T.M."/>
            <person name="Portetelle D."/>
            <person name="Porwollik S."/>
            <person name="Prescott A.M."/>
            <person name="Presecan E."/>
            <person name="Pujic P."/>
            <person name="Purnelle B."/>
            <person name="Rapoport G."/>
            <person name="Rey M."/>
            <person name="Reynolds S."/>
            <person name="Rieger M."/>
            <person name="Rivolta C."/>
            <person name="Rocha E."/>
            <person name="Roche B."/>
            <person name="Rose M."/>
            <person name="Sadaie Y."/>
            <person name="Sato T."/>
            <person name="Scanlan E."/>
            <person name="Schleich S."/>
            <person name="Schroeter R."/>
            <person name="Scoffone F."/>
            <person name="Sekiguchi J."/>
            <person name="Sekowska A."/>
            <person name="Seror S.J."/>
            <person name="Serror P."/>
            <person name="Shin B.-S."/>
            <person name="Soldo B."/>
            <person name="Sorokin A."/>
            <person name="Tacconi E."/>
            <person name="Takagi T."/>
            <person name="Takahashi H."/>
            <person name="Takemaru K."/>
            <person name="Takeuchi M."/>
            <person name="Tamakoshi A."/>
            <person name="Tanaka T."/>
            <person name="Terpstra P."/>
            <person name="Tognoni A."/>
            <person name="Tosato V."/>
            <person name="Uchiyama S."/>
            <person name="Vandenbol M."/>
            <person name="Vannier F."/>
            <person name="Vassarotti A."/>
            <person name="Viari A."/>
            <person name="Wambutt R."/>
            <person name="Wedler E."/>
            <person name="Wedler H."/>
            <person name="Weitzenegger T."/>
            <person name="Winters P."/>
            <person name="Wipat A."/>
            <person name="Yamamoto H."/>
            <person name="Yamane K."/>
            <person name="Yasumoto K."/>
            <person name="Yata K."/>
            <person name="Yoshida K."/>
            <person name="Yoshikawa H.-F."/>
            <person name="Zumstein E."/>
            <person name="Yoshikawa H."/>
            <person name="Danchin A."/>
        </authorList>
    </citation>
    <scope>NUCLEOTIDE SEQUENCE [LARGE SCALE GENOMIC DNA]</scope>
    <source>
        <strain>168</strain>
    </source>
</reference>
<proteinExistence type="inferred from homology"/>
<name>YJDJ_BACSU</name>
<evidence type="ECO:0000255" key="1"/>
<evidence type="ECO:0000305" key="2"/>
<organism>
    <name type="scientific">Bacillus subtilis (strain 168)</name>
    <dbReference type="NCBI Taxonomy" id="224308"/>
    <lineage>
        <taxon>Bacteria</taxon>
        <taxon>Bacillati</taxon>
        <taxon>Bacillota</taxon>
        <taxon>Bacilli</taxon>
        <taxon>Bacillales</taxon>
        <taxon>Bacillaceae</taxon>
        <taxon>Bacillus</taxon>
    </lineage>
</organism>
<accession>O31651</accession>
<dbReference type="EMBL" id="AL009126">
    <property type="protein sequence ID" value="CAB13064.1"/>
    <property type="molecule type" value="Genomic_DNA"/>
</dbReference>
<dbReference type="PIR" id="E69849">
    <property type="entry name" value="E69849"/>
</dbReference>
<dbReference type="RefSeq" id="NP_389089.1">
    <property type="nucleotide sequence ID" value="NC_000964.3"/>
</dbReference>
<dbReference type="RefSeq" id="WP_003232822.1">
    <property type="nucleotide sequence ID" value="NZ_OZ025638.1"/>
</dbReference>
<dbReference type="SMR" id="O31651"/>
<dbReference type="FunCoup" id="O31651">
    <property type="interactions" value="85"/>
</dbReference>
<dbReference type="STRING" id="224308.BSU12070"/>
<dbReference type="PaxDb" id="224308-BSU12070"/>
<dbReference type="EnsemblBacteria" id="CAB13064">
    <property type="protein sequence ID" value="CAB13064"/>
    <property type="gene ID" value="BSU_12070"/>
</dbReference>
<dbReference type="GeneID" id="936449"/>
<dbReference type="KEGG" id="bsu:BSU12070"/>
<dbReference type="PATRIC" id="fig|224308.179.peg.1303"/>
<dbReference type="eggNOG" id="ENOG5032WKK">
    <property type="taxonomic scope" value="Bacteria"/>
</dbReference>
<dbReference type="InParanoid" id="O31651"/>
<dbReference type="OrthoDB" id="2721142at2"/>
<dbReference type="BioCyc" id="BSUB:BSU12070-MONOMER"/>
<dbReference type="Proteomes" id="UP000001570">
    <property type="component" value="Chromosome"/>
</dbReference>
<dbReference type="GO" id="GO:0016020">
    <property type="term" value="C:membrane"/>
    <property type="evidence" value="ECO:0007669"/>
    <property type="project" value="UniProtKB-SubCell"/>
</dbReference>
<dbReference type="InterPro" id="IPR025440">
    <property type="entry name" value="DUF4306"/>
</dbReference>
<dbReference type="InterPro" id="IPR016508">
    <property type="entry name" value="UCP007103"/>
</dbReference>
<dbReference type="Pfam" id="PF14154">
    <property type="entry name" value="DUF4306"/>
    <property type="match status" value="1"/>
</dbReference>
<dbReference type="PIRSF" id="PIRSF007103">
    <property type="entry name" value="UCP007103"/>
    <property type="match status" value="1"/>
</dbReference>
<gene>
    <name type="primary">yjdJ</name>
    <name type="ordered locus">BSU12070</name>
</gene>
<comment type="subcellular location">
    <subcellularLocation>
        <location evidence="2">Membrane</location>
        <topology evidence="2">Single-pass membrane protein</topology>
    </subcellularLocation>
</comment>